<proteinExistence type="inferred from homology"/>
<protein>
    <recommendedName>
        <fullName evidence="1">Imidazole glycerol phosphate synthase subunit HisF</fullName>
        <ecNumber evidence="1">4.3.2.10</ecNumber>
    </recommendedName>
    <alternativeName>
        <fullName evidence="1">IGP synthase cyclase subunit</fullName>
    </alternativeName>
    <alternativeName>
        <fullName evidence="1">IGP synthase subunit HisF</fullName>
    </alternativeName>
    <alternativeName>
        <fullName evidence="1">ImGP synthase subunit HisF</fullName>
        <shortName evidence="1">IGPS subunit HisF</shortName>
    </alternativeName>
</protein>
<keyword id="KW-0028">Amino-acid biosynthesis</keyword>
<keyword id="KW-0963">Cytoplasm</keyword>
<keyword id="KW-0368">Histidine biosynthesis</keyword>
<keyword id="KW-0456">Lyase</keyword>
<name>HIS6_EXISA</name>
<accession>C4L176</accession>
<reference key="1">
    <citation type="journal article" date="2011" name="J. Bacteriol.">
        <title>Complete genome sequence of the Thermophilic Bacterium Exiguobacterium sp. AT1b.</title>
        <authorList>
            <person name="Vishnivetskaya T.A."/>
            <person name="Lucas S."/>
            <person name="Copeland A."/>
            <person name="Lapidus A."/>
            <person name="Glavina del Rio T."/>
            <person name="Dalin E."/>
            <person name="Tice H."/>
            <person name="Bruce D.C."/>
            <person name="Goodwin L.A."/>
            <person name="Pitluck S."/>
            <person name="Saunders E."/>
            <person name="Brettin T."/>
            <person name="Detter C."/>
            <person name="Han C."/>
            <person name="Larimer F."/>
            <person name="Land M.L."/>
            <person name="Hauser L.J."/>
            <person name="Kyrpides N.C."/>
            <person name="Ovchinnikova G."/>
            <person name="Kathariou S."/>
            <person name="Ramaley R.F."/>
            <person name="Rodrigues D.F."/>
            <person name="Hendrix C."/>
            <person name="Richardson P."/>
            <person name="Tiedje J.M."/>
        </authorList>
    </citation>
    <scope>NUCLEOTIDE SEQUENCE [LARGE SCALE GENOMIC DNA]</scope>
    <source>
        <strain>ATCC BAA-1283 / AT1b</strain>
    </source>
</reference>
<sequence>MLKRRIIPCLDVKEGRVVKGIEFVQLRDIGDPVEIAKYYDESGADELVFLDITASTERRQTMLDVVSAVARKVFIPLTVGGGIRSLEDISSLLKAGADKVSLNTLAVESPSLIREAADRFGSQCIVVAIDVKFKDGEYYVYTYGGKQKTDLLAVEWAKQVAALGAGELLVTSMNQDGKQSGYDLSILEQLREVVDIPIIASGGAGNAEHVVEALEKVDAALLASILHDRKTTVEEVKHVCKSHNLPMRFVSTKMD</sequence>
<dbReference type="EC" id="4.3.2.10" evidence="1"/>
<dbReference type="EMBL" id="CP001615">
    <property type="protein sequence ID" value="ACQ69022.1"/>
    <property type="molecule type" value="Genomic_DNA"/>
</dbReference>
<dbReference type="RefSeq" id="WP_012726141.1">
    <property type="nucleotide sequence ID" value="NC_012673.1"/>
</dbReference>
<dbReference type="SMR" id="C4L176"/>
<dbReference type="STRING" id="360911.EAT1b_0088"/>
<dbReference type="KEGG" id="eat:EAT1b_0088"/>
<dbReference type="eggNOG" id="COG0107">
    <property type="taxonomic scope" value="Bacteria"/>
</dbReference>
<dbReference type="HOGENOM" id="CLU_048577_4_0_9"/>
<dbReference type="OrthoDB" id="9781903at2"/>
<dbReference type="UniPathway" id="UPA00031">
    <property type="reaction ID" value="UER00010"/>
</dbReference>
<dbReference type="Proteomes" id="UP000000716">
    <property type="component" value="Chromosome"/>
</dbReference>
<dbReference type="GO" id="GO:0005737">
    <property type="term" value="C:cytoplasm"/>
    <property type="evidence" value="ECO:0007669"/>
    <property type="project" value="UniProtKB-SubCell"/>
</dbReference>
<dbReference type="GO" id="GO:0000107">
    <property type="term" value="F:imidazoleglycerol-phosphate synthase activity"/>
    <property type="evidence" value="ECO:0007669"/>
    <property type="project" value="UniProtKB-UniRule"/>
</dbReference>
<dbReference type="GO" id="GO:0016829">
    <property type="term" value="F:lyase activity"/>
    <property type="evidence" value="ECO:0007669"/>
    <property type="project" value="UniProtKB-KW"/>
</dbReference>
<dbReference type="GO" id="GO:0000105">
    <property type="term" value="P:L-histidine biosynthetic process"/>
    <property type="evidence" value="ECO:0007669"/>
    <property type="project" value="UniProtKB-UniRule"/>
</dbReference>
<dbReference type="CDD" id="cd04731">
    <property type="entry name" value="HisF"/>
    <property type="match status" value="1"/>
</dbReference>
<dbReference type="FunFam" id="3.20.20.70:FF:000006">
    <property type="entry name" value="Imidazole glycerol phosphate synthase subunit HisF"/>
    <property type="match status" value="1"/>
</dbReference>
<dbReference type="Gene3D" id="3.20.20.70">
    <property type="entry name" value="Aldolase class I"/>
    <property type="match status" value="1"/>
</dbReference>
<dbReference type="HAMAP" id="MF_01013">
    <property type="entry name" value="HisF"/>
    <property type="match status" value="1"/>
</dbReference>
<dbReference type="InterPro" id="IPR013785">
    <property type="entry name" value="Aldolase_TIM"/>
</dbReference>
<dbReference type="InterPro" id="IPR006062">
    <property type="entry name" value="His_biosynth"/>
</dbReference>
<dbReference type="InterPro" id="IPR004651">
    <property type="entry name" value="HisF"/>
</dbReference>
<dbReference type="InterPro" id="IPR050064">
    <property type="entry name" value="IGPS_HisA/HisF"/>
</dbReference>
<dbReference type="InterPro" id="IPR011060">
    <property type="entry name" value="RibuloseP-bd_barrel"/>
</dbReference>
<dbReference type="NCBIfam" id="TIGR00735">
    <property type="entry name" value="hisF"/>
    <property type="match status" value="1"/>
</dbReference>
<dbReference type="PANTHER" id="PTHR21235:SF2">
    <property type="entry name" value="IMIDAZOLE GLYCEROL PHOSPHATE SYNTHASE HISHF"/>
    <property type="match status" value="1"/>
</dbReference>
<dbReference type="PANTHER" id="PTHR21235">
    <property type="entry name" value="IMIDAZOLE GLYCEROL PHOSPHATE SYNTHASE SUBUNIT HISF/H IGP SYNTHASE SUBUNIT HISF/H"/>
    <property type="match status" value="1"/>
</dbReference>
<dbReference type="Pfam" id="PF00977">
    <property type="entry name" value="His_biosynth"/>
    <property type="match status" value="1"/>
</dbReference>
<dbReference type="SUPFAM" id="SSF51366">
    <property type="entry name" value="Ribulose-phoshate binding barrel"/>
    <property type="match status" value="1"/>
</dbReference>
<gene>
    <name evidence="1" type="primary">hisF</name>
    <name type="ordered locus">EAT1b_0088</name>
</gene>
<organism>
    <name type="scientific">Exiguobacterium sp. (strain ATCC BAA-1283 / AT1b)</name>
    <dbReference type="NCBI Taxonomy" id="360911"/>
    <lineage>
        <taxon>Bacteria</taxon>
        <taxon>Bacillati</taxon>
        <taxon>Bacillota</taxon>
        <taxon>Bacilli</taxon>
        <taxon>Bacillales</taxon>
        <taxon>Bacillales Family XII. Incertae Sedis</taxon>
        <taxon>Exiguobacterium</taxon>
    </lineage>
</organism>
<evidence type="ECO:0000255" key="1">
    <source>
        <dbReference type="HAMAP-Rule" id="MF_01013"/>
    </source>
</evidence>
<feature type="chain" id="PRO_1000213210" description="Imidazole glycerol phosphate synthase subunit HisF">
    <location>
        <begin position="1"/>
        <end position="255"/>
    </location>
</feature>
<feature type="active site" evidence="1">
    <location>
        <position position="11"/>
    </location>
</feature>
<feature type="active site" evidence="1">
    <location>
        <position position="130"/>
    </location>
</feature>
<comment type="function">
    <text evidence="1">IGPS catalyzes the conversion of PRFAR and glutamine to IGP, AICAR and glutamate. The HisF subunit catalyzes the cyclization activity that produces IGP and AICAR from PRFAR using the ammonia provided by the HisH subunit.</text>
</comment>
<comment type="catalytic activity">
    <reaction evidence="1">
        <text>5-[(5-phospho-1-deoxy-D-ribulos-1-ylimino)methylamino]-1-(5-phospho-beta-D-ribosyl)imidazole-4-carboxamide + L-glutamine = D-erythro-1-(imidazol-4-yl)glycerol 3-phosphate + 5-amino-1-(5-phospho-beta-D-ribosyl)imidazole-4-carboxamide + L-glutamate + H(+)</text>
        <dbReference type="Rhea" id="RHEA:24793"/>
        <dbReference type="ChEBI" id="CHEBI:15378"/>
        <dbReference type="ChEBI" id="CHEBI:29985"/>
        <dbReference type="ChEBI" id="CHEBI:58278"/>
        <dbReference type="ChEBI" id="CHEBI:58359"/>
        <dbReference type="ChEBI" id="CHEBI:58475"/>
        <dbReference type="ChEBI" id="CHEBI:58525"/>
        <dbReference type="EC" id="4.3.2.10"/>
    </reaction>
</comment>
<comment type="pathway">
    <text evidence="1">Amino-acid biosynthesis; L-histidine biosynthesis; L-histidine from 5-phospho-alpha-D-ribose 1-diphosphate: step 5/9.</text>
</comment>
<comment type="subunit">
    <text evidence="1">Heterodimer of HisH and HisF.</text>
</comment>
<comment type="subcellular location">
    <subcellularLocation>
        <location evidence="1">Cytoplasm</location>
    </subcellularLocation>
</comment>
<comment type="similarity">
    <text evidence="1">Belongs to the HisA/HisF family.</text>
</comment>